<evidence type="ECO:0000250" key="1"/>
<evidence type="ECO:0000255" key="2"/>
<evidence type="ECO:0000305" key="3"/>
<dbReference type="EMBL" id="AE005674">
    <property type="protein sequence ID" value="AAN44991.2"/>
    <property type="molecule type" value="Genomic_DNA"/>
</dbReference>
<dbReference type="EMBL" id="AE014073">
    <property type="protein sequence ID" value="AAP19195.1"/>
    <property type="molecule type" value="Genomic_DNA"/>
</dbReference>
<dbReference type="RefSeq" id="NP_709284.2">
    <property type="nucleotide sequence ID" value="NC_004337.2"/>
</dbReference>
<dbReference type="RefSeq" id="WP_000922639.1">
    <property type="nucleotide sequence ID" value="NZ_WPGW01000284.1"/>
</dbReference>
<dbReference type="SMR" id="P0AB95"/>
<dbReference type="STRING" id="198214.SF3535"/>
<dbReference type="PaxDb" id="198214-SF3535"/>
<dbReference type="GeneID" id="1026381"/>
<dbReference type="GeneID" id="93778490"/>
<dbReference type="KEGG" id="sfl:SF3535"/>
<dbReference type="KEGG" id="sfx:S4233"/>
<dbReference type="PATRIC" id="fig|198214.7.peg.4163"/>
<dbReference type="HOGENOM" id="CLU_043931_1_0_6"/>
<dbReference type="Proteomes" id="UP000001006">
    <property type="component" value="Chromosome"/>
</dbReference>
<dbReference type="Proteomes" id="UP000002673">
    <property type="component" value="Chromosome"/>
</dbReference>
<dbReference type="GO" id="GO:0005886">
    <property type="term" value="C:plasma membrane"/>
    <property type="evidence" value="ECO:0007669"/>
    <property type="project" value="UniProtKB-SubCell"/>
</dbReference>
<dbReference type="GO" id="GO:0042960">
    <property type="term" value="F:antimonite secondary active transmembrane transporter activity"/>
    <property type="evidence" value="ECO:0007669"/>
    <property type="project" value="TreeGrafter"/>
</dbReference>
<dbReference type="GO" id="GO:0008490">
    <property type="term" value="F:arsenite secondary active transmembrane transporter activity"/>
    <property type="evidence" value="ECO:0007669"/>
    <property type="project" value="TreeGrafter"/>
</dbReference>
<dbReference type="GO" id="GO:0046685">
    <property type="term" value="P:response to arsenic-containing substance"/>
    <property type="evidence" value="ECO:0007669"/>
    <property type="project" value="UniProtKB-KW"/>
</dbReference>
<dbReference type="CDD" id="cd01118">
    <property type="entry name" value="ArsB_permease"/>
    <property type="match status" value="1"/>
</dbReference>
<dbReference type="InterPro" id="IPR000802">
    <property type="entry name" value="Arsenical_pump_ArsB"/>
</dbReference>
<dbReference type="NCBIfam" id="TIGR00935">
    <property type="entry name" value="2a45"/>
    <property type="match status" value="1"/>
</dbReference>
<dbReference type="NCBIfam" id="NF011980">
    <property type="entry name" value="PRK15445.1"/>
    <property type="match status" value="1"/>
</dbReference>
<dbReference type="PANTHER" id="PTHR43302">
    <property type="entry name" value="TRANSPORTER ARSB-RELATED"/>
    <property type="match status" value="1"/>
</dbReference>
<dbReference type="PANTHER" id="PTHR43302:SF5">
    <property type="entry name" value="TRANSPORTER ARSB-RELATED"/>
    <property type="match status" value="1"/>
</dbReference>
<dbReference type="Pfam" id="PF02040">
    <property type="entry name" value="ArsB"/>
    <property type="match status" value="1"/>
</dbReference>
<dbReference type="PRINTS" id="PR00758">
    <property type="entry name" value="ARSENICPUMP"/>
</dbReference>
<protein>
    <recommendedName>
        <fullName>Arsenical pump membrane protein</fullName>
    </recommendedName>
    <alternativeName>
        <fullName>Arsenic efflux pump protein</fullName>
    </alternativeName>
</protein>
<keyword id="KW-0059">Arsenical resistance</keyword>
<keyword id="KW-0997">Cell inner membrane</keyword>
<keyword id="KW-1003">Cell membrane</keyword>
<keyword id="KW-0472">Membrane</keyword>
<keyword id="KW-1185">Reference proteome</keyword>
<keyword id="KW-0812">Transmembrane</keyword>
<keyword id="KW-1133">Transmembrane helix</keyword>
<keyword id="KW-0813">Transport</keyword>
<accession>P0AB95</accession>
<accession>P37310</accession>
<accession>P76708</accession>
<feature type="chain" id="PRO_0000201469" description="Arsenical pump membrane protein">
    <location>
        <begin position="1"/>
        <end position="429"/>
    </location>
</feature>
<feature type="topological domain" description="Cytoplasmic" evidence="2">
    <location>
        <begin position="1"/>
        <end position="20"/>
    </location>
</feature>
<feature type="transmembrane region" description="Helical" evidence="2">
    <location>
        <begin position="21"/>
        <end position="41"/>
    </location>
</feature>
<feature type="topological domain" description="Periplasmic" evidence="2">
    <location>
        <begin position="42"/>
        <end position="45"/>
    </location>
</feature>
<feature type="transmembrane region" description="Helical" evidence="2">
    <location>
        <begin position="46"/>
        <end position="66"/>
    </location>
</feature>
<feature type="topological domain" description="Cytoplasmic" evidence="2">
    <location>
        <begin position="67"/>
        <end position="97"/>
    </location>
</feature>
<feature type="transmembrane region" description="Helical" evidence="2">
    <location>
        <begin position="98"/>
        <end position="118"/>
    </location>
</feature>
<feature type="topological domain" description="Periplasmic" evidence="2">
    <location>
        <begin position="119"/>
        <end position="120"/>
    </location>
</feature>
<feature type="transmembrane region" description="Helical" evidence="2">
    <location>
        <begin position="121"/>
        <end position="141"/>
    </location>
</feature>
<feature type="topological domain" description="Cytoplasmic" evidence="2">
    <location>
        <begin position="142"/>
        <end position="151"/>
    </location>
</feature>
<feature type="transmembrane region" description="Helical" evidence="2">
    <location>
        <begin position="152"/>
        <end position="172"/>
    </location>
</feature>
<feature type="topological domain" description="Periplasmic" evidence="2">
    <location>
        <begin position="173"/>
        <end position="177"/>
    </location>
</feature>
<feature type="transmembrane region" description="Helical" evidence="2">
    <location>
        <begin position="178"/>
        <end position="198"/>
    </location>
</feature>
<feature type="topological domain" description="Cytoplasmic" evidence="2">
    <location>
        <begin position="199"/>
        <end position="227"/>
    </location>
</feature>
<feature type="transmembrane region" description="Helical" evidence="2">
    <location>
        <begin position="228"/>
        <end position="248"/>
    </location>
</feature>
<feature type="transmembrane region" description="Helical" evidence="2">
    <location>
        <begin position="249"/>
        <end position="269"/>
    </location>
</feature>
<feature type="topological domain" description="Cytoplasmic" evidence="2">
    <location>
        <begin position="270"/>
        <end position="273"/>
    </location>
</feature>
<feature type="transmembrane region" description="Helical" evidence="2">
    <location>
        <begin position="274"/>
        <end position="294"/>
    </location>
</feature>
<feature type="topological domain" description="Periplasmic" evidence="2">
    <location>
        <begin position="295"/>
        <end position="310"/>
    </location>
</feature>
<feature type="transmembrane region" description="Helical" evidence="2">
    <location>
        <begin position="311"/>
        <end position="331"/>
    </location>
</feature>
<feature type="topological domain" description="Cytoplasmic" evidence="2">
    <location>
        <begin position="332"/>
        <end position="406"/>
    </location>
</feature>
<feature type="transmembrane region" description="Helical" evidence="2">
    <location>
        <begin position="407"/>
        <end position="427"/>
    </location>
</feature>
<feature type="topological domain" description="Periplasmic" evidence="2">
    <location>
        <begin position="428"/>
        <end position="429"/>
    </location>
</feature>
<reference key="1">
    <citation type="journal article" date="2002" name="Nucleic Acids Res.">
        <title>Genome sequence of Shigella flexneri 2a: insights into pathogenicity through comparison with genomes of Escherichia coli K12 and O157.</title>
        <authorList>
            <person name="Jin Q."/>
            <person name="Yuan Z."/>
            <person name="Xu J."/>
            <person name="Wang Y."/>
            <person name="Shen Y."/>
            <person name="Lu W."/>
            <person name="Wang J."/>
            <person name="Liu H."/>
            <person name="Yang J."/>
            <person name="Yang F."/>
            <person name="Zhang X."/>
            <person name="Zhang J."/>
            <person name="Yang G."/>
            <person name="Wu H."/>
            <person name="Qu D."/>
            <person name="Dong J."/>
            <person name="Sun L."/>
            <person name="Xue Y."/>
            <person name="Zhao A."/>
            <person name="Gao Y."/>
            <person name="Zhu J."/>
            <person name="Kan B."/>
            <person name="Ding K."/>
            <person name="Chen S."/>
            <person name="Cheng H."/>
            <person name="Yao Z."/>
            <person name="He B."/>
            <person name="Chen R."/>
            <person name="Ma D."/>
            <person name="Qiang B."/>
            <person name="Wen Y."/>
            <person name="Hou Y."/>
            <person name="Yu J."/>
        </authorList>
    </citation>
    <scope>NUCLEOTIDE SEQUENCE [LARGE SCALE GENOMIC DNA]</scope>
    <source>
        <strain>301 / Serotype 2a</strain>
    </source>
</reference>
<reference key="2">
    <citation type="journal article" date="2003" name="Infect. Immun.">
        <title>Complete genome sequence and comparative genomics of Shigella flexneri serotype 2a strain 2457T.</title>
        <authorList>
            <person name="Wei J."/>
            <person name="Goldberg M.B."/>
            <person name="Burland V."/>
            <person name="Venkatesan M.M."/>
            <person name="Deng W."/>
            <person name="Fournier G."/>
            <person name="Mayhew G.F."/>
            <person name="Plunkett G. III"/>
            <person name="Rose D.J."/>
            <person name="Darling A."/>
            <person name="Mau B."/>
            <person name="Perna N.T."/>
            <person name="Payne S.M."/>
            <person name="Runyen-Janecky L.J."/>
            <person name="Zhou S."/>
            <person name="Schwartz D.C."/>
            <person name="Blattner F.R."/>
        </authorList>
    </citation>
    <scope>NUCLEOTIDE SEQUENCE [LARGE SCALE GENOMIC DNA]</scope>
    <source>
        <strain>ATCC 700930 / 2457T / Serotype 2a</strain>
    </source>
</reference>
<organism>
    <name type="scientific">Shigella flexneri</name>
    <dbReference type="NCBI Taxonomy" id="623"/>
    <lineage>
        <taxon>Bacteria</taxon>
        <taxon>Pseudomonadati</taxon>
        <taxon>Pseudomonadota</taxon>
        <taxon>Gammaproteobacteria</taxon>
        <taxon>Enterobacterales</taxon>
        <taxon>Enterobacteriaceae</taxon>
        <taxon>Shigella</taxon>
    </lineage>
</organism>
<sequence>MLLAGAIFVLTIVLVIWQPKGLGIGWSATLGAVLALVTGVVHPGDIPVVWNIVWNATAAFIAVIIISLLLDESGFFEWAALHVSRWGNGRGRLLFTWIVLLGAAVAALFANDGAALILTPIVIAMLLALGFSKGTTLAFVMAAGFIADTASLPLIVSNLVNIVSADFFGLGFREYASVMVPVDIAAIVATLVMLHLYFRKDIPQNYDMALLKSPAEAIKDPATFKTGWVVLLLLLVGFFVLEPLGIPVSAIAAVGALILFVVAKRGHAINTGKVLRGAPWQIVIFSLGMYLVVYGLRNAGLTEYLSGVLNVLADNGLWAATLGTGFLTAFLSSIMNNMPTVLVGALSIDGSTASGVIKEAMVYANVIGCDLGPKITPIGSLATLLWLHVLSQKNMTISWGYYFRTGIIMTLPVLFVTLAALALRLSFTL</sequence>
<comment type="function">
    <text evidence="1">Involved in arsenical resistance. Thought to form the channel of an arsenite pump (By similarity).</text>
</comment>
<comment type="subcellular location">
    <subcellularLocation>
        <location evidence="1">Cell inner membrane</location>
        <topology evidence="1">Multi-pass membrane protein</topology>
    </subcellularLocation>
</comment>
<comment type="similarity">
    <text evidence="3">Belongs to the ArsB family.</text>
</comment>
<name>ARSB_SHIFL</name>
<gene>
    <name type="primary">arsB</name>
    <name type="ordered locus">SF3535</name>
    <name type="ordered locus">S4233</name>
</gene>
<proteinExistence type="inferred from homology"/>